<feature type="chain" id="PRO_0000156634" description="Homoserine kinase">
    <location>
        <begin position="1"/>
        <end position="322"/>
    </location>
</feature>
<feature type="binding site" evidence="1">
    <location>
        <begin position="107"/>
        <end position="117"/>
    </location>
    <ligand>
        <name>ATP</name>
        <dbReference type="ChEBI" id="CHEBI:30616"/>
    </ligand>
</feature>
<dbReference type="EC" id="2.7.1.39" evidence="1"/>
<dbReference type="EMBL" id="AE003849">
    <property type="protein sequence ID" value="AAF85023.1"/>
    <property type="molecule type" value="Genomic_DNA"/>
</dbReference>
<dbReference type="PIR" id="F82583">
    <property type="entry name" value="F82583"/>
</dbReference>
<dbReference type="RefSeq" id="WP_010894672.1">
    <property type="nucleotide sequence ID" value="NC_002488.3"/>
</dbReference>
<dbReference type="SMR" id="Q9PBC0"/>
<dbReference type="STRING" id="160492.XF_2224"/>
<dbReference type="KEGG" id="xfa:XF_2224"/>
<dbReference type="eggNOG" id="COG0083">
    <property type="taxonomic scope" value="Bacteria"/>
</dbReference>
<dbReference type="HOGENOM" id="CLU_041243_1_1_6"/>
<dbReference type="UniPathway" id="UPA00050">
    <property type="reaction ID" value="UER00064"/>
</dbReference>
<dbReference type="Proteomes" id="UP000000812">
    <property type="component" value="Chromosome"/>
</dbReference>
<dbReference type="GO" id="GO:0005737">
    <property type="term" value="C:cytoplasm"/>
    <property type="evidence" value="ECO:0007669"/>
    <property type="project" value="UniProtKB-SubCell"/>
</dbReference>
<dbReference type="GO" id="GO:0005524">
    <property type="term" value="F:ATP binding"/>
    <property type="evidence" value="ECO:0007669"/>
    <property type="project" value="UniProtKB-UniRule"/>
</dbReference>
<dbReference type="GO" id="GO:0004413">
    <property type="term" value="F:homoserine kinase activity"/>
    <property type="evidence" value="ECO:0007669"/>
    <property type="project" value="UniProtKB-UniRule"/>
</dbReference>
<dbReference type="GO" id="GO:0009088">
    <property type="term" value="P:threonine biosynthetic process"/>
    <property type="evidence" value="ECO:0007669"/>
    <property type="project" value="UniProtKB-UniRule"/>
</dbReference>
<dbReference type="Gene3D" id="3.30.230.10">
    <property type="match status" value="1"/>
</dbReference>
<dbReference type="Gene3D" id="3.30.70.890">
    <property type="entry name" value="GHMP kinase, C-terminal domain"/>
    <property type="match status" value="1"/>
</dbReference>
<dbReference type="HAMAP" id="MF_00384">
    <property type="entry name" value="Homoser_kinase"/>
    <property type="match status" value="1"/>
</dbReference>
<dbReference type="InterPro" id="IPR013750">
    <property type="entry name" value="GHMP_kinase_C_dom"/>
</dbReference>
<dbReference type="InterPro" id="IPR036554">
    <property type="entry name" value="GHMP_kinase_C_sf"/>
</dbReference>
<dbReference type="InterPro" id="IPR006204">
    <property type="entry name" value="GHMP_kinase_N_dom"/>
</dbReference>
<dbReference type="InterPro" id="IPR000870">
    <property type="entry name" value="Homoserine_kinase"/>
</dbReference>
<dbReference type="InterPro" id="IPR020568">
    <property type="entry name" value="Ribosomal_Su5_D2-typ_SF"/>
</dbReference>
<dbReference type="InterPro" id="IPR014721">
    <property type="entry name" value="Ribsml_uS5_D2-typ_fold_subgr"/>
</dbReference>
<dbReference type="NCBIfam" id="NF002288">
    <property type="entry name" value="PRK01212.1-4"/>
    <property type="match status" value="1"/>
</dbReference>
<dbReference type="NCBIfam" id="TIGR00191">
    <property type="entry name" value="thrB"/>
    <property type="match status" value="1"/>
</dbReference>
<dbReference type="PANTHER" id="PTHR20861:SF1">
    <property type="entry name" value="HOMOSERINE KINASE"/>
    <property type="match status" value="1"/>
</dbReference>
<dbReference type="PANTHER" id="PTHR20861">
    <property type="entry name" value="HOMOSERINE/4-DIPHOSPHOCYTIDYL-2-C-METHYL-D-ERYTHRITOL KINASE"/>
    <property type="match status" value="1"/>
</dbReference>
<dbReference type="Pfam" id="PF08544">
    <property type="entry name" value="GHMP_kinases_C"/>
    <property type="match status" value="1"/>
</dbReference>
<dbReference type="Pfam" id="PF00288">
    <property type="entry name" value="GHMP_kinases_N"/>
    <property type="match status" value="1"/>
</dbReference>
<dbReference type="PIRSF" id="PIRSF000676">
    <property type="entry name" value="Homoser_kin"/>
    <property type="match status" value="1"/>
</dbReference>
<dbReference type="PRINTS" id="PR00958">
    <property type="entry name" value="HOMSERKINASE"/>
</dbReference>
<dbReference type="SUPFAM" id="SSF55060">
    <property type="entry name" value="GHMP Kinase, C-terminal domain"/>
    <property type="match status" value="1"/>
</dbReference>
<dbReference type="SUPFAM" id="SSF54211">
    <property type="entry name" value="Ribosomal protein S5 domain 2-like"/>
    <property type="match status" value="1"/>
</dbReference>
<organism>
    <name type="scientific">Xylella fastidiosa (strain 9a5c)</name>
    <dbReference type="NCBI Taxonomy" id="160492"/>
    <lineage>
        <taxon>Bacteria</taxon>
        <taxon>Pseudomonadati</taxon>
        <taxon>Pseudomonadota</taxon>
        <taxon>Gammaproteobacteria</taxon>
        <taxon>Lysobacterales</taxon>
        <taxon>Lysobacteraceae</taxon>
        <taxon>Xylella</taxon>
    </lineage>
</organism>
<keyword id="KW-0028">Amino-acid biosynthesis</keyword>
<keyword id="KW-0067">ATP-binding</keyword>
<keyword id="KW-0963">Cytoplasm</keyword>
<keyword id="KW-0418">Kinase</keyword>
<keyword id="KW-0547">Nucleotide-binding</keyword>
<keyword id="KW-0791">Threonine biosynthesis</keyword>
<keyword id="KW-0808">Transferase</keyword>
<reference key="1">
    <citation type="journal article" date="2000" name="Nature">
        <title>The genome sequence of the plant pathogen Xylella fastidiosa.</title>
        <authorList>
            <person name="Simpson A.J.G."/>
            <person name="Reinach F.C."/>
            <person name="Arruda P."/>
            <person name="Abreu F.A."/>
            <person name="Acencio M."/>
            <person name="Alvarenga R."/>
            <person name="Alves L.M.C."/>
            <person name="Araya J.E."/>
            <person name="Baia G.S."/>
            <person name="Baptista C.S."/>
            <person name="Barros M.H."/>
            <person name="Bonaccorsi E.D."/>
            <person name="Bordin S."/>
            <person name="Bove J.M."/>
            <person name="Briones M.R.S."/>
            <person name="Bueno M.R.P."/>
            <person name="Camargo A.A."/>
            <person name="Camargo L.E.A."/>
            <person name="Carraro D.M."/>
            <person name="Carrer H."/>
            <person name="Colauto N.B."/>
            <person name="Colombo C."/>
            <person name="Costa F.F."/>
            <person name="Costa M.C.R."/>
            <person name="Costa-Neto C.M."/>
            <person name="Coutinho L.L."/>
            <person name="Cristofani M."/>
            <person name="Dias-Neto E."/>
            <person name="Docena C."/>
            <person name="El-Dorry H."/>
            <person name="Facincani A.P."/>
            <person name="Ferreira A.J.S."/>
            <person name="Ferreira V.C.A."/>
            <person name="Ferro J.A."/>
            <person name="Fraga J.S."/>
            <person name="Franca S.C."/>
            <person name="Franco M.C."/>
            <person name="Frohme M."/>
            <person name="Furlan L.R."/>
            <person name="Garnier M."/>
            <person name="Goldman G.H."/>
            <person name="Goldman M.H.S."/>
            <person name="Gomes S.L."/>
            <person name="Gruber A."/>
            <person name="Ho P.L."/>
            <person name="Hoheisel J.D."/>
            <person name="Junqueira M.L."/>
            <person name="Kemper E.L."/>
            <person name="Kitajima J.P."/>
            <person name="Krieger J.E."/>
            <person name="Kuramae E.E."/>
            <person name="Laigret F."/>
            <person name="Lambais M.R."/>
            <person name="Leite L.C.C."/>
            <person name="Lemos E.G.M."/>
            <person name="Lemos M.V.F."/>
            <person name="Lopes S.A."/>
            <person name="Lopes C.R."/>
            <person name="Machado J.A."/>
            <person name="Machado M.A."/>
            <person name="Madeira A.M.B.N."/>
            <person name="Madeira H.M.F."/>
            <person name="Marino C.L."/>
            <person name="Marques M.V."/>
            <person name="Martins E.A.L."/>
            <person name="Martins E.M.F."/>
            <person name="Matsukuma A.Y."/>
            <person name="Menck C.F.M."/>
            <person name="Miracca E.C."/>
            <person name="Miyaki C.Y."/>
            <person name="Monteiro-Vitorello C.B."/>
            <person name="Moon D.H."/>
            <person name="Nagai M.A."/>
            <person name="Nascimento A.L.T.O."/>
            <person name="Netto L.E.S."/>
            <person name="Nhani A. Jr."/>
            <person name="Nobrega F.G."/>
            <person name="Nunes L.R."/>
            <person name="Oliveira M.A."/>
            <person name="de Oliveira M.C."/>
            <person name="de Oliveira R.C."/>
            <person name="Palmieri D.A."/>
            <person name="Paris A."/>
            <person name="Peixoto B.R."/>
            <person name="Pereira G.A.G."/>
            <person name="Pereira H.A. Jr."/>
            <person name="Pesquero J.B."/>
            <person name="Quaggio R.B."/>
            <person name="Roberto P.G."/>
            <person name="Rodrigues V."/>
            <person name="de Rosa A.J.M."/>
            <person name="de Rosa V.E. Jr."/>
            <person name="de Sa R.G."/>
            <person name="Santelli R.V."/>
            <person name="Sawasaki H.E."/>
            <person name="da Silva A.C.R."/>
            <person name="da Silva A.M."/>
            <person name="da Silva F.R."/>
            <person name="Silva W.A. Jr."/>
            <person name="da Silveira J.F."/>
            <person name="Silvestri M.L.Z."/>
            <person name="Siqueira W.J."/>
            <person name="de Souza A.A."/>
            <person name="de Souza A.P."/>
            <person name="Terenzi M.F."/>
            <person name="Truffi D."/>
            <person name="Tsai S.M."/>
            <person name="Tsuhako M.H."/>
            <person name="Vallada H."/>
            <person name="Van Sluys M.A."/>
            <person name="Verjovski-Almeida S."/>
            <person name="Vettore A.L."/>
            <person name="Zago M.A."/>
            <person name="Zatz M."/>
            <person name="Meidanis J."/>
            <person name="Setubal J.C."/>
        </authorList>
    </citation>
    <scope>NUCLEOTIDE SEQUENCE [LARGE SCALE GENOMIC DNA]</scope>
    <source>
        <strain>9a5c</strain>
    </source>
</reference>
<evidence type="ECO:0000255" key="1">
    <source>
        <dbReference type="HAMAP-Rule" id="MF_00384"/>
    </source>
</evidence>
<accession>Q9PBC0</accession>
<sequence length="322" mass="33797">MNRTLQPDRGASQTAPAAHQARAFAPASVANVAVGFDLLGYPMDQVGDTVTVRRIDTPQVRIAAIRGIAQPLPLQTERNTAGAALLSMHRDLALPFGFELEIDKGIPLSSGMGGSAASCVAALLAANALLEEPLRREHLYRYALDGEAVASGSRHGDNLGPLFLGGLVLCTLERLVPVTVPAAWHSLLVHPDTLLETRRAREVLKDPYLLPDIVTQSANLALVLAGCYHGDAELVRAGLRDVLIEPRRAPLIAGFTAAQQAALQADAMGASISGAGPSVFAWFQTRSAAEAAAPAVRAAFTAAGFDSQAWVTPLISPGARLL</sequence>
<gene>
    <name evidence="1" type="primary">thrB</name>
    <name type="ordered locus">XF_2224</name>
</gene>
<protein>
    <recommendedName>
        <fullName evidence="1">Homoserine kinase</fullName>
        <shortName evidence="1">HK</shortName>
        <shortName evidence="1">HSK</shortName>
        <ecNumber evidence="1">2.7.1.39</ecNumber>
    </recommendedName>
</protein>
<proteinExistence type="inferred from homology"/>
<comment type="function">
    <text evidence="1">Catalyzes the ATP-dependent phosphorylation of L-homoserine to L-homoserine phosphate.</text>
</comment>
<comment type="catalytic activity">
    <reaction evidence="1">
        <text>L-homoserine + ATP = O-phospho-L-homoserine + ADP + H(+)</text>
        <dbReference type="Rhea" id="RHEA:13985"/>
        <dbReference type="ChEBI" id="CHEBI:15378"/>
        <dbReference type="ChEBI" id="CHEBI:30616"/>
        <dbReference type="ChEBI" id="CHEBI:57476"/>
        <dbReference type="ChEBI" id="CHEBI:57590"/>
        <dbReference type="ChEBI" id="CHEBI:456216"/>
        <dbReference type="EC" id="2.7.1.39"/>
    </reaction>
</comment>
<comment type="pathway">
    <text evidence="1">Amino-acid biosynthesis; L-threonine biosynthesis; L-threonine from L-aspartate: step 4/5.</text>
</comment>
<comment type="subcellular location">
    <subcellularLocation>
        <location evidence="1">Cytoplasm</location>
    </subcellularLocation>
</comment>
<comment type="similarity">
    <text evidence="1">Belongs to the GHMP kinase family. Homoserine kinase subfamily.</text>
</comment>
<name>KHSE_XYLFA</name>